<protein>
    <recommendedName>
        <fullName evidence="2">Translation initiation factor IF-2</fullName>
    </recommendedName>
</protein>
<name>IF2_STRPS</name>
<keyword id="KW-0963">Cytoplasm</keyword>
<keyword id="KW-0342">GTP-binding</keyword>
<keyword id="KW-0396">Initiation factor</keyword>
<keyword id="KW-0547">Nucleotide-binding</keyword>
<keyword id="KW-0648">Protein biosynthesis</keyword>
<accession>B2IME4</accession>
<proteinExistence type="inferred from homology"/>
<reference key="1">
    <citation type="journal article" date="2009" name="BMC Genomics">
        <title>Genome evolution driven by host adaptations results in a more virulent and antimicrobial-resistant Streptococcus pneumoniae serotype 14.</title>
        <authorList>
            <person name="Ding F."/>
            <person name="Tang P."/>
            <person name="Hsu M.-H."/>
            <person name="Cui P."/>
            <person name="Hu S."/>
            <person name="Yu J."/>
            <person name="Chiu C.-H."/>
        </authorList>
    </citation>
    <scope>NUCLEOTIDE SEQUENCE [LARGE SCALE GENOMIC DNA]</scope>
    <source>
        <strain>CGSP14</strain>
    </source>
</reference>
<organism>
    <name type="scientific">Streptococcus pneumoniae (strain CGSP14)</name>
    <dbReference type="NCBI Taxonomy" id="516950"/>
    <lineage>
        <taxon>Bacteria</taxon>
        <taxon>Bacillati</taxon>
        <taxon>Bacillota</taxon>
        <taxon>Bacilli</taxon>
        <taxon>Lactobacillales</taxon>
        <taxon>Streptococcaceae</taxon>
        <taxon>Streptococcus</taxon>
    </lineage>
</organism>
<gene>
    <name evidence="2" type="primary">infB</name>
    <name type="ordered locus">SPCG_0519</name>
</gene>
<comment type="function">
    <text evidence="2">One of the essential components for the initiation of protein synthesis. Protects formylmethionyl-tRNA from spontaneous hydrolysis and promotes its binding to the 30S ribosomal subunits. Also involved in the hydrolysis of GTP during the formation of the 70S ribosomal complex.</text>
</comment>
<comment type="subcellular location">
    <subcellularLocation>
        <location evidence="2">Cytoplasm</location>
    </subcellularLocation>
</comment>
<comment type="similarity">
    <text evidence="2">Belongs to the TRAFAC class translation factor GTPase superfamily. Classic translation factor GTPase family. IF-2 subfamily.</text>
</comment>
<evidence type="ECO:0000250" key="1"/>
<evidence type="ECO:0000255" key="2">
    <source>
        <dbReference type="HAMAP-Rule" id="MF_00100"/>
    </source>
</evidence>
<evidence type="ECO:0000256" key="3">
    <source>
        <dbReference type="SAM" id="MobiDB-lite"/>
    </source>
</evidence>
<sequence>MSKKRLYEIAKELGKESKEVVARAKELGLDVKSHSSSVEEAVAAKIAASFKPAAAPKVEAKPAAPKVSAEKKAEKSEPAKPAVAKEEAKPAEPVAPKTEKVAAKPQSRNFKAEREARAKEQAERRKQNKGNNRDQQQNGNRQKNDGRNGGKQGQSNRDNRRFNDQAKKQQGQQKRRNERRQQEDKRSNQVAPRIDFKARAAALKAEQNAEYARSSEERFKQYQAAKEALAQANKRKEPEEIFEEAAKLAEQAQQVQAVVEVVPEKKEPAVDTRRKKQARPDKNRDDYDHEEDGPRKQQKNRSSQNQVRNQKNSNWNNNKKNKKGNNKNNRNQTPKPVTERKFHELPTEFEYTDGMTVAEIAKRIKREPAEIVKKLFMMGVMATQNQSLDGETIELLMVDYGIEAKQKVEVDNADIERFFVEDGYLNEDELVERPPVVTIMGHVDHGKTTLLDTLRNSRVATGEAGGITQHIGAYQIVENGKKITFLDTPGHAAFTSMRARGASVTDITILVVAADDGVMPQTIEAINHSKAANVPIIVAINKIDKPGANPERVIGELAEHGVMSTAWGGDSEFVEISAKFNQNIEELLETVLLVAEIQELKADPTVRAIGTVIEARLDKGKGAVATLLVQQGTLNVQDPIVVGNTFGRVRAMTNDLGRRVKVAGPSTPVSITGLNEAPMAGDHFAVYEDEKSARAAGEERAKRALMKQRQATQRVSLENLFDTLKAGELKSVNVIIKADVQGSVEALSASLQKIDVEGVKVTIVHSAVGAINESDVTLAEASNAFIVGFNVRPTPQARQQAEADDVEIRLHSIIYKVIEEMEEAMKGMLDPEFEEKVIGEAVIRETFKVSKVGTIGGFMVINGKVARDSKVRVIRDGVVIYDGELASLKHYKDDVKEVTNGREGGLMIDGYNDIKMDDVIEAYVMEEIKR</sequence>
<feature type="chain" id="PRO_1000093833" description="Translation initiation factor IF-2">
    <location>
        <begin position="1"/>
        <end position="930"/>
    </location>
</feature>
<feature type="domain" description="tr-type G">
    <location>
        <begin position="432"/>
        <end position="599"/>
    </location>
</feature>
<feature type="region of interest" description="Disordered" evidence="3">
    <location>
        <begin position="50"/>
        <end position="217"/>
    </location>
</feature>
<feature type="region of interest" description="Disordered" evidence="3">
    <location>
        <begin position="260"/>
        <end position="346"/>
    </location>
</feature>
<feature type="region of interest" description="G1" evidence="1">
    <location>
        <begin position="441"/>
        <end position="448"/>
    </location>
</feature>
<feature type="region of interest" description="G2" evidence="1">
    <location>
        <begin position="466"/>
        <end position="470"/>
    </location>
</feature>
<feature type="region of interest" description="G3" evidence="1">
    <location>
        <begin position="487"/>
        <end position="490"/>
    </location>
</feature>
<feature type="region of interest" description="G4" evidence="1">
    <location>
        <begin position="541"/>
        <end position="544"/>
    </location>
</feature>
<feature type="region of interest" description="G5" evidence="1">
    <location>
        <begin position="577"/>
        <end position="579"/>
    </location>
</feature>
<feature type="compositionally biased region" description="Low complexity" evidence="3">
    <location>
        <begin position="50"/>
        <end position="67"/>
    </location>
</feature>
<feature type="compositionally biased region" description="Basic and acidic residues" evidence="3">
    <location>
        <begin position="68"/>
        <end position="90"/>
    </location>
</feature>
<feature type="compositionally biased region" description="Basic and acidic residues" evidence="3">
    <location>
        <begin position="110"/>
        <end position="125"/>
    </location>
</feature>
<feature type="compositionally biased region" description="Low complexity" evidence="3">
    <location>
        <begin position="129"/>
        <end position="141"/>
    </location>
</feature>
<feature type="compositionally biased region" description="Basic and acidic residues" evidence="3">
    <location>
        <begin position="157"/>
        <end position="167"/>
    </location>
</feature>
<feature type="compositionally biased region" description="Basic and acidic residues" evidence="3">
    <location>
        <begin position="262"/>
        <end position="295"/>
    </location>
</feature>
<feature type="compositionally biased region" description="Low complexity" evidence="3">
    <location>
        <begin position="309"/>
        <end position="318"/>
    </location>
</feature>
<feature type="compositionally biased region" description="Basic and acidic residues" evidence="3">
    <location>
        <begin position="337"/>
        <end position="346"/>
    </location>
</feature>
<feature type="binding site" evidence="2">
    <location>
        <begin position="441"/>
        <end position="448"/>
    </location>
    <ligand>
        <name>GTP</name>
        <dbReference type="ChEBI" id="CHEBI:37565"/>
    </ligand>
</feature>
<feature type="binding site" evidence="2">
    <location>
        <begin position="487"/>
        <end position="491"/>
    </location>
    <ligand>
        <name>GTP</name>
        <dbReference type="ChEBI" id="CHEBI:37565"/>
    </ligand>
</feature>
<feature type="binding site" evidence="2">
    <location>
        <begin position="541"/>
        <end position="544"/>
    </location>
    <ligand>
        <name>GTP</name>
        <dbReference type="ChEBI" id="CHEBI:37565"/>
    </ligand>
</feature>
<dbReference type="EMBL" id="CP001033">
    <property type="protein sequence ID" value="ACB89771.1"/>
    <property type="molecule type" value="Genomic_DNA"/>
</dbReference>
<dbReference type="RefSeq" id="WP_000039206.1">
    <property type="nucleotide sequence ID" value="NC_010582.1"/>
</dbReference>
<dbReference type="SMR" id="B2IME4"/>
<dbReference type="KEGG" id="spw:SPCG_0519"/>
<dbReference type="HOGENOM" id="CLU_006301_5_0_9"/>
<dbReference type="GO" id="GO:0005829">
    <property type="term" value="C:cytosol"/>
    <property type="evidence" value="ECO:0007669"/>
    <property type="project" value="TreeGrafter"/>
</dbReference>
<dbReference type="GO" id="GO:0005525">
    <property type="term" value="F:GTP binding"/>
    <property type="evidence" value="ECO:0007669"/>
    <property type="project" value="UniProtKB-KW"/>
</dbReference>
<dbReference type="GO" id="GO:0003924">
    <property type="term" value="F:GTPase activity"/>
    <property type="evidence" value="ECO:0007669"/>
    <property type="project" value="UniProtKB-UniRule"/>
</dbReference>
<dbReference type="GO" id="GO:0003743">
    <property type="term" value="F:translation initiation factor activity"/>
    <property type="evidence" value="ECO:0007669"/>
    <property type="project" value="UniProtKB-UniRule"/>
</dbReference>
<dbReference type="CDD" id="cd01887">
    <property type="entry name" value="IF2_eIF5B"/>
    <property type="match status" value="1"/>
</dbReference>
<dbReference type="CDD" id="cd03702">
    <property type="entry name" value="IF2_mtIF2_II"/>
    <property type="match status" value="1"/>
</dbReference>
<dbReference type="CDD" id="cd03692">
    <property type="entry name" value="mtIF2_IVc"/>
    <property type="match status" value="1"/>
</dbReference>
<dbReference type="FunFam" id="1.10.10.2480:FF:000003">
    <property type="entry name" value="Translation initiation factor IF-2"/>
    <property type="match status" value="1"/>
</dbReference>
<dbReference type="FunFam" id="2.40.30.10:FF:000007">
    <property type="entry name" value="Translation initiation factor IF-2"/>
    <property type="match status" value="1"/>
</dbReference>
<dbReference type="FunFam" id="2.40.30.10:FF:000008">
    <property type="entry name" value="Translation initiation factor IF-2"/>
    <property type="match status" value="1"/>
</dbReference>
<dbReference type="FunFam" id="3.40.50.10050:FF:000001">
    <property type="entry name" value="Translation initiation factor IF-2"/>
    <property type="match status" value="1"/>
</dbReference>
<dbReference type="FunFam" id="3.40.50.300:FF:000019">
    <property type="entry name" value="Translation initiation factor IF-2"/>
    <property type="match status" value="1"/>
</dbReference>
<dbReference type="Gene3D" id="1.10.10.2480">
    <property type="match status" value="1"/>
</dbReference>
<dbReference type="Gene3D" id="3.40.50.300">
    <property type="entry name" value="P-loop containing nucleotide triphosphate hydrolases"/>
    <property type="match status" value="1"/>
</dbReference>
<dbReference type="Gene3D" id="2.40.30.10">
    <property type="entry name" value="Translation factors"/>
    <property type="match status" value="2"/>
</dbReference>
<dbReference type="Gene3D" id="3.40.50.10050">
    <property type="entry name" value="Translation initiation factor IF- 2, domain 3"/>
    <property type="match status" value="1"/>
</dbReference>
<dbReference type="HAMAP" id="MF_00100_B">
    <property type="entry name" value="IF_2_B"/>
    <property type="match status" value="1"/>
</dbReference>
<dbReference type="InterPro" id="IPR053905">
    <property type="entry name" value="EF-G-like_DII"/>
</dbReference>
<dbReference type="InterPro" id="IPR044145">
    <property type="entry name" value="IF2_II"/>
</dbReference>
<dbReference type="InterPro" id="IPR006847">
    <property type="entry name" value="IF2_N"/>
</dbReference>
<dbReference type="InterPro" id="IPR027417">
    <property type="entry name" value="P-loop_NTPase"/>
</dbReference>
<dbReference type="InterPro" id="IPR005225">
    <property type="entry name" value="Small_GTP-bd"/>
</dbReference>
<dbReference type="InterPro" id="IPR000795">
    <property type="entry name" value="T_Tr_GTP-bd_dom"/>
</dbReference>
<dbReference type="InterPro" id="IPR000178">
    <property type="entry name" value="TF_IF2_bacterial-like"/>
</dbReference>
<dbReference type="InterPro" id="IPR015760">
    <property type="entry name" value="TIF_IF2"/>
</dbReference>
<dbReference type="InterPro" id="IPR023115">
    <property type="entry name" value="TIF_IF2_dom3"/>
</dbReference>
<dbReference type="InterPro" id="IPR036925">
    <property type="entry name" value="TIF_IF2_dom3_sf"/>
</dbReference>
<dbReference type="InterPro" id="IPR009000">
    <property type="entry name" value="Transl_B-barrel_sf"/>
</dbReference>
<dbReference type="NCBIfam" id="TIGR00487">
    <property type="entry name" value="IF-2"/>
    <property type="match status" value="1"/>
</dbReference>
<dbReference type="NCBIfam" id="TIGR00231">
    <property type="entry name" value="small_GTP"/>
    <property type="match status" value="1"/>
</dbReference>
<dbReference type="PANTHER" id="PTHR43381:SF5">
    <property type="entry name" value="TR-TYPE G DOMAIN-CONTAINING PROTEIN"/>
    <property type="match status" value="1"/>
</dbReference>
<dbReference type="PANTHER" id="PTHR43381">
    <property type="entry name" value="TRANSLATION INITIATION FACTOR IF-2-RELATED"/>
    <property type="match status" value="1"/>
</dbReference>
<dbReference type="Pfam" id="PF22042">
    <property type="entry name" value="EF-G_D2"/>
    <property type="match status" value="1"/>
</dbReference>
<dbReference type="Pfam" id="PF00009">
    <property type="entry name" value="GTP_EFTU"/>
    <property type="match status" value="1"/>
</dbReference>
<dbReference type="Pfam" id="PF11987">
    <property type="entry name" value="IF-2"/>
    <property type="match status" value="1"/>
</dbReference>
<dbReference type="Pfam" id="PF04760">
    <property type="entry name" value="IF2_N"/>
    <property type="match status" value="2"/>
</dbReference>
<dbReference type="SUPFAM" id="SSF52156">
    <property type="entry name" value="Initiation factor IF2/eIF5b, domain 3"/>
    <property type="match status" value="1"/>
</dbReference>
<dbReference type="SUPFAM" id="SSF52540">
    <property type="entry name" value="P-loop containing nucleoside triphosphate hydrolases"/>
    <property type="match status" value="1"/>
</dbReference>
<dbReference type="SUPFAM" id="SSF50447">
    <property type="entry name" value="Translation proteins"/>
    <property type="match status" value="2"/>
</dbReference>
<dbReference type="PROSITE" id="PS51722">
    <property type="entry name" value="G_TR_2"/>
    <property type="match status" value="1"/>
</dbReference>
<dbReference type="PROSITE" id="PS01176">
    <property type="entry name" value="IF2"/>
    <property type="match status" value="1"/>
</dbReference>